<reference key="1">
    <citation type="journal article" date="2005" name="Nature">
        <title>The genome of the social amoeba Dictyostelium discoideum.</title>
        <authorList>
            <person name="Eichinger L."/>
            <person name="Pachebat J.A."/>
            <person name="Gloeckner G."/>
            <person name="Rajandream M.A."/>
            <person name="Sucgang R."/>
            <person name="Berriman M."/>
            <person name="Song J."/>
            <person name="Olsen R."/>
            <person name="Szafranski K."/>
            <person name="Xu Q."/>
            <person name="Tunggal B."/>
            <person name="Kummerfeld S."/>
            <person name="Madera M."/>
            <person name="Konfortov B.A."/>
            <person name="Rivero F."/>
            <person name="Bankier A.T."/>
            <person name="Lehmann R."/>
            <person name="Hamlin N."/>
            <person name="Davies R."/>
            <person name="Gaudet P."/>
            <person name="Fey P."/>
            <person name="Pilcher K."/>
            <person name="Chen G."/>
            <person name="Saunders D."/>
            <person name="Sodergren E.J."/>
            <person name="Davis P."/>
            <person name="Kerhornou A."/>
            <person name="Nie X."/>
            <person name="Hall N."/>
            <person name="Anjard C."/>
            <person name="Hemphill L."/>
            <person name="Bason N."/>
            <person name="Farbrother P."/>
            <person name="Desany B."/>
            <person name="Just E."/>
            <person name="Morio T."/>
            <person name="Rost R."/>
            <person name="Churcher C.M."/>
            <person name="Cooper J."/>
            <person name="Haydock S."/>
            <person name="van Driessche N."/>
            <person name="Cronin A."/>
            <person name="Goodhead I."/>
            <person name="Muzny D.M."/>
            <person name="Mourier T."/>
            <person name="Pain A."/>
            <person name="Lu M."/>
            <person name="Harper D."/>
            <person name="Lindsay R."/>
            <person name="Hauser H."/>
            <person name="James K.D."/>
            <person name="Quiles M."/>
            <person name="Madan Babu M."/>
            <person name="Saito T."/>
            <person name="Buchrieser C."/>
            <person name="Wardroper A."/>
            <person name="Felder M."/>
            <person name="Thangavelu M."/>
            <person name="Johnson D."/>
            <person name="Knights A."/>
            <person name="Loulseged H."/>
            <person name="Mungall K.L."/>
            <person name="Oliver K."/>
            <person name="Price C."/>
            <person name="Quail M.A."/>
            <person name="Urushihara H."/>
            <person name="Hernandez J."/>
            <person name="Rabbinowitsch E."/>
            <person name="Steffen D."/>
            <person name="Sanders M."/>
            <person name="Ma J."/>
            <person name="Kohara Y."/>
            <person name="Sharp S."/>
            <person name="Simmonds M.N."/>
            <person name="Spiegler S."/>
            <person name="Tivey A."/>
            <person name="Sugano S."/>
            <person name="White B."/>
            <person name="Walker D."/>
            <person name="Woodward J.R."/>
            <person name="Winckler T."/>
            <person name="Tanaka Y."/>
            <person name="Shaulsky G."/>
            <person name="Schleicher M."/>
            <person name="Weinstock G.M."/>
            <person name="Rosenthal A."/>
            <person name="Cox E.C."/>
            <person name="Chisholm R.L."/>
            <person name="Gibbs R.A."/>
            <person name="Loomis W.F."/>
            <person name="Platzer M."/>
            <person name="Kay R.R."/>
            <person name="Williams J.G."/>
            <person name="Dear P.H."/>
            <person name="Noegel A.A."/>
            <person name="Barrell B.G."/>
            <person name="Kuspa A."/>
        </authorList>
    </citation>
    <scope>NUCLEOTIDE SEQUENCE [LARGE SCALE GENOMIC DNA]</scope>
    <source>
        <strain>AX4</strain>
    </source>
</reference>
<dbReference type="EMBL" id="AAFI02000172">
    <property type="protein sequence ID" value="EAL61979.1"/>
    <property type="molecule type" value="Genomic_DNA"/>
</dbReference>
<dbReference type="RefSeq" id="XP_635485.1">
    <property type="nucleotide sequence ID" value="XM_630393.1"/>
</dbReference>
<dbReference type="SMR" id="Q54FD7"/>
<dbReference type="FunCoup" id="Q54FD7">
    <property type="interactions" value="321"/>
</dbReference>
<dbReference type="STRING" id="44689.Q54FD7"/>
<dbReference type="PaxDb" id="44689-DDB0267017"/>
<dbReference type="EnsemblProtists" id="EAL61979">
    <property type="protein sequence ID" value="EAL61979"/>
    <property type="gene ID" value="DDB_G0290927"/>
</dbReference>
<dbReference type="GeneID" id="8627901"/>
<dbReference type="KEGG" id="ddi:DDB_G0290927"/>
<dbReference type="dictyBase" id="DDB_G0290927">
    <property type="gene designation" value="etfa"/>
</dbReference>
<dbReference type="VEuPathDB" id="AmoebaDB:DDB_G0290927"/>
<dbReference type="eggNOG" id="KOG3954">
    <property type="taxonomic scope" value="Eukaryota"/>
</dbReference>
<dbReference type="HOGENOM" id="CLU_034178_0_0_1"/>
<dbReference type="InParanoid" id="Q54FD7"/>
<dbReference type="OMA" id="HHICGIG"/>
<dbReference type="PhylomeDB" id="Q54FD7"/>
<dbReference type="Reactome" id="R-DDI-611105">
    <property type="pathway name" value="Respiratory electron transport"/>
</dbReference>
<dbReference type="PRO" id="PR:Q54FD7"/>
<dbReference type="Proteomes" id="UP000002195">
    <property type="component" value="Chromosome 5"/>
</dbReference>
<dbReference type="GO" id="GO:0005759">
    <property type="term" value="C:mitochondrial matrix"/>
    <property type="evidence" value="ECO:0007669"/>
    <property type="project" value="UniProtKB-SubCell"/>
</dbReference>
<dbReference type="GO" id="GO:0005739">
    <property type="term" value="C:mitochondrion"/>
    <property type="evidence" value="ECO:0000318"/>
    <property type="project" value="GO_Central"/>
</dbReference>
<dbReference type="GO" id="GO:0009055">
    <property type="term" value="F:electron transfer activity"/>
    <property type="evidence" value="ECO:0000318"/>
    <property type="project" value="GO_Central"/>
</dbReference>
<dbReference type="GO" id="GO:0050660">
    <property type="term" value="F:flavin adenine dinucleotide binding"/>
    <property type="evidence" value="ECO:0000318"/>
    <property type="project" value="GO_Central"/>
</dbReference>
<dbReference type="GO" id="GO:0033539">
    <property type="term" value="P:fatty acid beta-oxidation using acyl-CoA dehydrogenase"/>
    <property type="evidence" value="ECO:0000318"/>
    <property type="project" value="GO_Central"/>
</dbReference>
<dbReference type="CDD" id="cd01715">
    <property type="entry name" value="ETF_alpha"/>
    <property type="match status" value="1"/>
</dbReference>
<dbReference type="FunFam" id="3.40.50.620:FF:000041">
    <property type="entry name" value="Electron transfer flavoprotein alpha subunit"/>
    <property type="match status" value="1"/>
</dbReference>
<dbReference type="FunFam" id="3.40.50.1220:FF:000001">
    <property type="entry name" value="Electron transfer flavoprotein, alpha subunit"/>
    <property type="match status" value="1"/>
</dbReference>
<dbReference type="Gene3D" id="3.40.50.620">
    <property type="entry name" value="HUPs"/>
    <property type="match status" value="1"/>
</dbReference>
<dbReference type="Gene3D" id="3.40.50.1220">
    <property type="entry name" value="TPP-binding domain"/>
    <property type="match status" value="1"/>
</dbReference>
<dbReference type="InterPro" id="IPR029035">
    <property type="entry name" value="DHS-like_NAD/FAD-binding_dom"/>
</dbReference>
<dbReference type="InterPro" id="IPR014730">
    <property type="entry name" value="ETF_a/b_N"/>
</dbReference>
<dbReference type="InterPro" id="IPR001308">
    <property type="entry name" value="ETF_a/FixB"/>
</dbReference>
<dbReference type="InterPro" id="IPR033947">
    <property type="entry name" value="ETF_alpha_N"/>
</dbReference>
<dbReference type="InterPro" id="IPR014731">
    <property type="entry name" value="ETF_asu_C"/>
</dbReference>
<dbReference type="InterPro" id="IPR018206">
    <property type="entry name" value="ETF_asu_C_CS"/>
</dbReference>
<dbReference type="InterPro" id="IPR014729">
    <property type="entry name" value="Rossmann-like_a/b/a_fold"/>
</dbReference>
<dbReference type="PANTHER" id="PTHR43153">
    <property type="entry name" value="ELECTRON TRANSFER FLAVOPROTEIN ALPHA"/>
    <property type="match status" value="1"/>
</dbReference>
<dbReference type="PANTHER" id="PTHR43153:SF1">
    <property type="entry name" value="ELECTRON TRANSFER FLAVOPROTEIN SUBUNIT ALPHA, MITOCHONDRIAL"/>
    <property type="match status" value="1"/>
</dbReference>
<dbReference type="Pfam" id="PF01012">
    <property type="entry name" value="ETF"/>
    <property type="match status" value="1"/>
</dbReference>
<dbReference type="Pfam" id="PF00766">
    <property type="entry name" value="ETF_alpha"/>
    <property type="match status" value="1"/>
</dbReference>
<dbReference type="PIRSF" id="PIRSF000089">
    <property type="entry name" value="Electra_flavoP_a"/>
    <property type="match status" value="1"/>
</dbReference>
<dbReference type="SMART" id="SM00893">
    <property type="entry name" value="ETF"/>
    <property type="match status" value="1"/>
</dbReference>
<dbReference type="SUPFAM" id="SSF52402">
    <property type="entry name" value="Adenine nucleotide alpha hydrolases-like"/>
    <property type="match status" value="1"/>
</dbReference>
<dbReference type="SUPFAM" id="SSF52467">
    <property type="entry name" value="DHS-like NAD/FAD-binding domain"/>
    <property type="match status" value="1"/>
</dbReference>
<dbReference type="PROSITE" id="PS00696">
    <property type="entry name" value="ETF_ALPHA"/>
    <property type="match status" value="1"/>
</dbReference>
<protein>
    <recommendedName>
        <fullName>Electron transfer flavoprotein subunit alpha, mitochondrial</fullName>
        <shortName>Alpha-ETF</shortName>
    </recommendedName>
</protein>
<comment type="function">
    <text evidence="1">The electron transfer flavoprotein serves as a specific electron acceptor for several dehydrogenases, including five acyl-CoA dehydrogenases, glutaryl-CoA and sarcosine dehydrogenase. It transfers the electrons to the main mitochondrial respiratory chain via ETF-ubiquinone oxidoreductase (ETF dehydrogenase) (By similarity).</text>
</comment>
<comment type="cofactor">
    <cofactor evidence="1">
        <name>FAD</name>
        <dbReference type="ChEBI" id="CHEBI:57692"/>
    </cofactor>
    <text evidence="1">Binds 1 FAD per dimer.</text>
</comment>
<comment type="subunit">
    <text evidence="1">Heterodimer of an alpha and a beta subunit.</text>
</comment>
<comment type="subcellular location">
    <subcellularLocation>
        <location evidence="1">Mitochondrion matrix</location>
    </subcellularLocation>
</comment>
<comment type="similarity">
    <text evidence="3">Belongs to the ETF alpha-subunit/FixB family.</text>
</comment>
<gene>
    <name type="primary">etfa</name>
    <name type="ORF">DDB_G0290927</name>
</gene>
<feature type="transit peptide" description="Mitochondrion" evidence="2">
    <location>
        <begin position="1"/>
        <end status="unknown"/>
    </location>
</feature>
<feature type="chain" id="PRO_0000327541" description="Electron transfer flavoprotein subunit alpha, mitochondrial">
    <location>
        <begin status="unknown"/>
        <end position="355"/>
    </location>
</feature>
<feature type="binding site" evidence="2">
    <location>
        <begin position="295"/>
        <end position="323"/>
    </location>
    <ligand>
        <name>FAD</name>
        <dbReference type="ChEBI" id="CHEBI:57692"/>
    </ligand>
</feature>
<sequence>MIGRLNLITKSNLFKNVNNLNNKNYYSTCLVIAEHDNNQLLNSTLNTITAASKLGVTNISVLVAGSKCGPVADSVSKVSGVTNVVCVDHPTLEHSLAETITPIIVKLQSSSSKEGDEITHIFTPASNFGKNFLPRVAALLNVSQISEITKVKDAETFQRPIYAGNAIATVKSTDKCKVGTVRTTAFDKAPTSGGSAKVVSANDWAVPLIEKAISETNIKWESSEVKKSERPELTSARVVVSGGRGMKNGENFKMLEELADTLGGAVGASRAAVDSGFVSNDLQVGQTGKIVAPELYIAVGISGAIQHLAGMKDSKVIVAINKDPEAPIFQVADVGLVGDLFNEVPKLTESIKKSK</sequence>
<accession>Q54FD7</accession>
<keyword id="KW-0249">Electron transport</keyword>
<keyword id="KW-0274">FAD</keyword>
<keyword id="KW-0285">Flavoprotein</keyword>
<keyword id="KW-0496">Mitochondrion</keyword>
<keyword id="KW-1185">Reference proteome</keyword>
<keyword id="KW-0809">Transit peptide</keyword>
<keyword id="KW-0813">Transport</keyword>
<organism>
    <name type="scientific">Dictyostelium discoideum</name>
    <name type="common">Social amoeba</name>
    <dbReference type="NCBI Taxonomy" id="44689"/>
    <lineage>
        <taxon>Eukaryota</taxon>
        <taxon>Amoebozoa</taxon>
        <taxon>Evosea</taxon>
        <taxon>Eumycetozoa</taxon>
        <taxon>Dictyostelia</taxon>
        <taxon>Dictyosteliales</taxon>
        <taxon>Dictyosteliaceae</taxon>
        <taxon>Dictyostelium</taxon>
    </lineage>
</organism>
<proteinExistence type="inferred from homology"/>
<evidence type="ECO:0000250" key="1"/>
<evidence type="ECO:0000255" key="2"/>
<evidence type="ECO:0000305" key="3"/>
<name>ETFA_DICDI</name>